<dbReference type="EMBL" id="CP000697">
    <property type="protein sequence ID" value="ABQ29388.1"/>
    <property type="molecule type" value="Genomic_DNA"/>
</dbReference>
<dbReference type="RefSeq" id="WP_007423040.1">
    <property type="nucleotide sequence ID" value="NC_009484.1"/>
</dbReference>
<dbReference type="STRING" id="349163.Acry_0160"/>
<dbReference type="KEGG" id="acr:Acry_0160"/>
<dbReference type="eggNOG" id="COG5328">
    <property type="taxonomic scope" value="Bacteria"/>
</dbReference>
<dbReference type="HOGENOM" id="CLU_112904_0_0_5"/>
<dbReference type="Proteomes" id="UP000000245">
    <property type="component" value="Chromosome"/>
</dbReference>
<dbReference type="HAMAP" id="MF_00678">
    <property type="entry name" value="UPF0262"/>
    <property type="match status" value="1"/>
</dbReference>
<dbReference type="InterPro" id="IPR008321">
    <property type="entry name" value="UCP032146"/>
</dbReference>
<dbReference type="NCBIfam" id="NF002769">
    <property type="entry name" value="PRK02853.1"/>
    <property type="match status" value="1"/>
</dbReference>
<dbReference type="Pfam" id="PF06793">
    <property type="entry name" value="UPF0262"/>
    <property type="match status" value="1"/>
</dbReference>
<organism>
    <name type="scientific">Acidiphilium cryptum (strain JF-5)</name>
    <dbReference type="NCBI Taxonomy" id="349163"/>
    <lineage>
        <taxon>Bacteria</taxon>
        <taxon>Pseudomonadati</taxon>
        <taxon>Pseudomonadota</taxon>
        <taxon>Alphaproteobacteria</taxon>
        <taxon>Acetobacterales</taxon>
        <taxon>Acidocellaceae</taxon>
        <taxon>Acidiphilium</taxon>
    </lineage>
</organism>
<sequence length="162" mass="17881">MADGAAEIRGRLRRVVLDEDIGGALSPMQEADRNQAIADLAADNRFALGTHPDAVTILHLSVQDGRLVFDVRDEADETLQTLVLAPGPFRSMIRDYQMLLDSYATAVAEGREARIQAIDMGRRGLHNEGAELVMARLDGKVLLDFDTARRLFTLICALHRRA</sequence>
<proteinExistence type="inferred from homology"/>
<feature type="chain" id="PRO_0000314188" description="UPF0262 protein Acry_0160">
    <location>
        <begin position="1"/>
        <end position="162"/>
    </location>
</feature>
<protein>
    <recommendedName>
        <fullName evidence="1">UPF0262 protein Acry_0160</fullName>
    </recommendedName>
</protein>
<accession>A5FUV6</accession>
<reference key="1">
    <citation type="submission" date="2007-05" db="EMBL/GenBank/DDBJ databases">
        <title>Complete sequence of chromosome of Acidiphilium cryptum JF-5.</title>
        <authorList>
            <consortium name="US DOE Joint Genome Institute"/>
            <person name="Copeland A."/>
            <person name="Lucas S."/>
            <person name="Lapidus A."/>
            <person name="Barry K."/>
            <person name="Detter J.C."/>
            <person name="Glavina del Rio T."/>
            <person name="Hammon N."/>
            <person name="Israni S."/>
            <person name="Dalin E."/>
            <person name="Tice H."/>
            <person name="Pitluck S."/>
            <person name="Sims D."/>
            <person name="Brettin T."/>
            <person name="Bruce D."/>
            <person name="Han C."/>
            <person name="Schmutz J."/>
            <person name="Larimer F."/>
            <person name="Land M."/>
            <person name="Hauser L."/>
            <person name="Kyrpides N."/>
            <person name="Kim E."/>
            <person name="Magnuson T."/>
            <person name="Richardson P."/>
        </authorList>
    </citation>
    <scope>NUCLEOTIDE SEQUENCE [LARGE SCALE GENOMIC DNA]</scope>
    <source>
        <strain>JF-5</strain>
    </source>
</reference>
<gene>
    <name type="ordered locus">Acry_0160</name>
</gene>
<comment type="similarity">
    <text evidence="1">Belongs to the UPF0262 family.</text>
</comment>
<evidence type="ECO:0000255" key="1">
    <source>
        <dbReference type="HAMAP-Rule" id="MF_00678"/>
    </source>
</evidence>
<name>Y160_ACICJ</name>
<keyword id="KW-1185">Reference proteome</keyword>